<name>RS14Z_THESQ</name>
<comment type="function">
    <text evidence="1">Binds 16S rRNA, required for the assembly of 30S particles and may also be responsible for determining the conformation of the 16S rRNA at the A site.</text>
</comment>
<comment type="cofactor">
    <cofactor evidence="1">
        <name>Zn(2+)</name>
        <dbReference type="ChEBI" id="CHEBI:29105"/>
    </cofactor>
    <text evidence="1">Binds 1 zinc ion per subunit.</text>
</comment>
<comment type="subunit">
    <text evidence="1">Part of the 30S ribosomal subunit. Contacts proteins S3 and S10.</text>
</comment>
<comment type="similarity">
    <text evidence="1">Belongs to the universal ribosomal protein uS14 family. Zinc-binding uS14 subfamily.</text>
</comment>
<reference key="1">
    <citation type="journal article" date="2011" name="J. Bacteriol.">
        <title>Genome sequence of Thermotoga sp. strain RQ2, a hyperthermophilic bacterium isolated from a geothermally heated region of the seafloor near Ribeira Quente, the Azores.</title>
        <authorList>
            <person name="Swithers K.S."/>
            <person name="DiPippo J.L."/>
            <person name="Bruce D.C."/>
            <person name="Detter C."/>
            <person name="Tapia R."/>
            <person name="Han S."/>
            <person name="Saunders E."/>
            <person name="Goodwin L.A."/>
            <person name="Han J."/>
            <person name="Woyke T."/>
            <person name="Pitluck S."/>
            <person name="Pennacchio L."/>
            <person name="Nolan M."/>
            <person name="Mikhailova N."/>
            <person name="Lykidis A."/>
            <person name="Land M.L."/>
            <person name="Brettin T."/>
            <person name="Stetter K.O."/>
            <person name="Nelson K.E."/>
            <person name="Gogarten J.P."/>
            <person name="Noll K.M."/>
        </authorList>
    </citation>
    <scope>NUCLEOTIDE SEQUENCE [LARGE SCALE GENOMIC DNA]</scope>
    <source>
        <strain>RQ2</strain>
    </source>
</reference>
<accession>B1LBM7</accession>
<dbReference type="EMBL" id="CP000969">
    <property type="protein sequence ID" value="ACB09725.1"/>
    <property type="molecule type" value="Genomic_DNA"/>
</dbReference>
<dbReference type="RefSeq" id="WP_008195018.1">
    <property type="nucleotide sequence ID" value="NC_010483.1"/>
</dbReference>
<dbReference type="SMR" id="B1LBM7"/>
<dbReference type="KEGG" id="trq:TRQ2_1381"/>
<dbReference type="HOGENOM" id="CLU_139869_3_0_0"/>
<dbReference type="Proteomes" id="UP000001687">
    <property type="component" value="Chromosome"/>
</dbReference>
<dbReference type="GO" id="GO:0005737">
    <property type="term" value="C:cytoplasm"/>
    <property type="evidence" value="ECO:0007669"/>
    <property type="project" value="UniProtKB-ARBA"/>
</dbReference>
<dbReference type="GO" id="GO:0015935">
    <property type="term" value="C:small ribosomal subunit"/>
    <property type="evidence" value="ECO:0007669"/>
    <property type="project" value="TreeGrafter"/>
</dbReference>
<dbReference type="GO" id="GO:0019843">
    <property type="term" value="F:rRNA binding"/>
    <property type="evidence" value="ECO:0007669"/>
    <property type="project" value="UniProtKB-UniRule"/>
</dbReference>
<dbReference type="GO" id="GO:0003735">
    <property type="term" value="F:structural constituent of ribosome"/>
    <property type="evidence" value="ECO:0007669"/>
    <property type="project" value="InterPro"/>
</dbReference>
<dbReference type="GO" id="GO:0008270">
    <property type="term" value="F:zinc ion binding"/>
    <property type="evidence" value="ECO:0007669"/>
    <property type="project" value="UniProtKB-UniRule"/>
</dbReference>
<dbReference type="GO" id="GO:0006412">
    <property type="term" value="P:translation"/>
    <property type="evidence" value="ECO:0007669"/>
    <property type="project" value="UniProtKB-UniRule"/>
</dbReference>
<dbReference type="FunFam" id="4.10.830.10:FF:000001">
    <property type="entry name" value="30S ribosomal protein S14 type Z"/>
    <property type="match status" value="1"/>
</dbReference>
<dbReference type="Gene3D" id="4.10.830.10">
    <property type="entry name" value="30s Ribosomal Protein S14, Chain N"/>
    <property type="match status" value="1"/>
</dbReference>
<dbReference type="HAMAP" id="MF_01364_B">
    <property type="entry name" value="Ribosomal_uS14_2_B"/>
    <property type="match status" value="1"/>
</dbReference>
<dbReference type="InterPro" id="IPR001209">
    <property type="entry name" value="Ribosomal_uS14"/>
</dbReference>
<dbReference type="InterPro" id="IPR023053">
    <property type="entry name" value="Ribosomal_uS14_bact"/>
</dbReference>
<dbReference type="InterPro" id="IPR018271">
    <property type="entry name" value="Ribosomal_uS14_CS"/>
</dbReference>
<dbReference type="InterPro" id="IPR043140">
    <property type="entry name" value="Ribosomal_uS14_sf"/>
</dbReference>
<dbReference type="NCBIfam" id="NF005974">
    <property type="entry name" value="PRK08061.1"/>
    <property type="match status" value="1"/>
</dbReference>
<dbReference type="PANTHER" id="PTHR19836">
    <property type="entry name" value="30S RIBOSOMAL PROTEIN S14"/>
    <property type="match status" value="1"/>
</dbReference>
<dbReference type="PANTHER" id="PTHR19836:SF19">
    <property type="entry name" value="SMALL RIBOSOMAL SUBUNIT PROTEIN US14M"/>
    <property type="match status" value="1"/>
</dbReference>
<dbReference type="Pfam" id="PF00253">
    <property type="entry name" value="Ribosomal_S14"/>
    <property type="match status" value="1"/>
</dbReference>
<dbReference type="SUPFAM" id="SSF57716">
    <property type="entry name" value="Glucocorticoid receptor-like (DNA-binding domain)"/>
    <property type="match status" value="1"/>
</dbReference>
<dbReference type="PROSITE" id="PS00527">
    <property type="entry name" value="RIBOSOMAL_S14"/>
    <property type="match status" value="1"/>
</dbReference>
<protein>
    <recommendedName>
        <fullName evidence="1">Small ribosomal subunit protein uS14</fullName>
    </recommendedName>
    <alternativeName>
        <fullName evidence="2">30S ribosomal protein S14 type Z</fullName>
    </alternativeName>
</protein>
<evidence type="ECO:0000255" key="1">
    <source>
        <dbReference type="HAMAP-Rule" id="MF_01364"/>
    </source>
</evidence>
<evidence type="ECO:0000305" key="2"/>
<proteinExistence type="inferred from homology"/>
<sequence length="61" mass="7329">MAKKAMIERWKKPKKYKVREYTRCHICGRPRAVYREFGLCRVCFRKLALEGKLPGVRKASW</sequence>
<gene>
    <name evidence="1" type="primary">rpsZ</name>
    <name evidence="1" type="synonym">rpsN</name>
    <name type="ordered locus">TRQ2_1381</name>
</gene>
<organism>
    <name type="scientific">Thermotoga sp. (strain RQ2)</name>
    <dbReference type="NCBI Taxonomy" id="126740"/>
    <lineage>
        <taxon>Bacteria</taxon>
        <taxon>Thermotogati</taxon>
        <taxon>Thermotogota</taxon>
        <taxon>Thermotogae</taxon>
        <taxon>Thermotogales</taxon>
        <taxon>Thermotogaceae</taxon>
        <taxon>Thermotoga</taxon>
    </lineage>
</organism>
<keyword id="KW-0479">Metal-binding</keyword>
<keyword id="KW-0687">Ribonucleoprotein</keyword>
<keyword id="KW-0689">Ribosomal protein</keyword>
<keyword id="KW-0694">RNA-binding</keyword>
<keyword id="KW-0699">rRNA-binding</keyword>
<keyword id="KW-0862">Zinc</keyword>
<feature type="chain" id="PRO_1000143925" description="Small ribosomal subunit protein uS14">
    <location>
        <begin position="1"/>
        <end position="61"/>
    </location>
</feature>
<feature type="binding site" evidence="1">
    <location>
        <position position="24"/>
    </location>
    <ligand>
        <name>Zn(2+)</name>
        <dbReference type="ChEBI" id="CHEBI:29105"/>
    </ligand>
</feature>
<feature type="binding site" evidence="1">
    <location>
        <position position="27"/>
    </location>
    <ligand>
        <name>Zn(2+)</name>
        <dbReference type="ChEBI" id="CHEBI:29105"/>
    </ligand>
</feature>
<feature type="binding site" evidence="1">
    <location>
        <position position="40"/>
    </location>
    <ligand>
        <name>Zn(2+)</name>
        <dbReference type="ChEBI" id="CHEBI:29105"/>
    </ligand>
</feature>
<feature type="binding site" evidence="1">
    <location>
        <position position="43"/>
    </location>
    <ligand>
        <name>Zn(2+)</name>
        <dbReference type="ChEBI" id="CHEBI:29105"/>
    </ligand>
</feature>